<accession>B1J2S4</accession>
<dbReference type="EC" id="3.6.1.31" evidence="1"/>
<dbReference type="EMBL" id="CP000949">
    <property type="protein sequence ID" value="ACA70955.1"/>
    <property type="molecule type" value="Genomic_DNA"/>
</dbReference>
<dbReference type="SMR" id="B1J2S4"/>
<dbReference type="STRING" id="390235.PputW619_0450"/>
<dbReference type="KEGG" id="ppw:PputW619_0450"/>
<dbReference type="eggNOG" id="COG0140">
    <property type="taxonomic scope" value="Bacteria"/>
</dbReference>
<dbReference type="HOGENOM" id="CLU_123337_1_2_6"/>
<dbReference type="OrthoDB" id="9814738at2"/>
<dbReference type="UniPathway" id="UPA00031">
    <property type="reaction ID" value="UER00007"/>
</dbReference>
<dbReference type="GO" id="GO:0005737">
    <property type="term" value="C:cytoplasm"/>
    <property type="evidence" value="ECO:0007669"/>
    <property type="project" value="UniProtKB-SubCell"/>
</dbReference>
<dbReference type="GO" id="GO:0005524">
    <property type="term" value="F:ATP binding"/>
    <property type="evidence" value="ECO:0007669"/>
    <property type="project" value="UniProtKB-KW"/>
</dbReference>
<dbReference type="GO" id="GO:0004636">
    <property type="term" value="F:phosphoribosyl-ATP diphosphatase activity"/>
    <property type="evidence" value="ECO:0007669"/>
    <property type="project" value="UniProtKB-UniRule"/>
</dbReference>
<dbReference type="GO" id="GO:0000105">
    <property type="term" value="P:L-histidine biosynthetic process"/>
    <property type="evidence" value="ECO:0007669"/>
    <property type="project" value="UniProtKB-UniRule"/>
</dbReference>
<dbReference type="CDD" id="cd11534">
    <property type="entry name" value="NTP-PPase_HisIE_like"/>
    <property type="match status" value="1"/>
</dbReference>
<dbReference type="Gene3D" id="1.10.287.1080">
    <property type="entry name" value="MazG-like"/>
    <property type="match status" value="1"/>
</dbReference>
<dbReference type="HAMAP" id="MF_01020">
    <property type="entry name" value="HisE"/>
    <property type="match status" value="1"/>
</dbReference>
<dbReference type="InterPro" id="IPR008179">
    <property type="entry name" value="HisE"/>
</dbReference>
<dbReference type="InterPro" id="IPR021130">
    <property type="entry name" value="PRib-ATP_PPHydrolase-like"/>
</dbReference>
<dbReference type="NCBIfam" id="TIGR03188">
    <property type="entry name" value="histidine_hisI"/>
    <property type="match status" value="1"/>
</dbReference>
<dbReference type="NCBIfam" id="NF001611">
    <property type="entry name" value="PRK00400.1-3"/>
    <property type="match status" value="1"/>
</dbReference>
<dbReference type="PANTHER" id="PTHR42945">
    <property type="entry name" value="HISTIDINE BIOSYNTHESIS BIFUNCTIONAL PROTEIN"/>
    <property type="match status" value="1"/>
</dbReference>
<dbReference type="PANTHER" id="PTHR42945:SF9">
    <property type="entry name" value="HISTIDINE BIOSYNTHESIS BIFUNCTIONAL PROTEIN HISIE"/>
    <property type="match status" value="1"/>
</dbReference>
<dbReference type="Pfam" id="PF01503">
    <property type="entry name" value="PRA-PH"/>
    <property type="match status" value="1"/>
</dbReference>
<dbReference type="SUPFAM" id="SSF101386">
    <property type="entry name" value="all-alpha NTP pyrophosphatases"/>
    <property type="match status" value="1"/>
</dbReference>
<gene>
    <name evidence="1" type="primary">hisE</name>
    <name type="ordered locus">PputW619_0450</name>
</gene>
<proteinExistence type="inferred from homology"/>
<organism>
    <name type="scientific">Pseudomonas putida (strain W619)</name>
    <dbReference type="NCBI Taxonomy" id="390235"/>
    <lineage>
        <taxon>Bacteria</taxon>
        <taxon>Pseudomonadati</taxon>
        <taxon>Pseudomonadota</taxon>
        <taxon>Gammaproteobacteria</taxon>
        <taxon>Pseudomonadales</taxon>
        <taxon>Pseudomonadaceae</taxon>
        <taxon>Pseudomonas</taxon>
    </lineage>
</organism>
<reference key="1">
    <citation type="submission" date="2008-02" db="EMBL/GenBank/DDBJ databases">
        <title>Complete sequence of Pseudomonas putida W619.</title>
        <authorList>
            <person name="Copeland A."/>
            <person name="Lucas S."/>
            <person name="Lapidus A."/>
            <person name="Barry K."/>
            <person name="Detter J.C."/>
            <person name="Glavina del Rio T."/>
            <person name="Dalin E."/>
            <person name="Tice H."/>
            <person name="Pitluck S."/>
            <person name="Chain P."/>
            <person name="Malfatti S."/>
            <person name="Shin M."/>
            <person name="Vergez L."/>
            <person name="Schmutz J."/>
            <person name="Larimer F."/>
            <person name="Land M."/>
            <person name="Hauser L."/>
            <person name="Kyrpides N."/>
            <person name="Kim E."/>
            <person name="Taghavi S."/>
            <person name="Vangronsveld D."/>
            <person name="van der Lelie D."/>
            <person name="Richardson P."/>
        </authorList>
    </citation>
    <scope>NUCLEOTIDE SEQUENCE [LARGE SCALE GENOMIC DNA]</scope>
    <source>
        <strain>W619</strain>
    </source>
</reference>
<comment type="catalytic activity">
    <reaction evidence="1">
        <text>1-(5-phospho-beta-D-ribosyl)-ATP + H2O = 1-(5-phospho-beta-D-ribosyl)-5'-AMP + diphosphate + H(+)</text>
        <dbReference type="Rhea" id="RHEA:22828"/>
        <dbReference type="ChEBI" id="CHEBI:15377"/>
        <dbReference type="ChEBI" id="CHEBI:15378"/>
        <dbReference type="ChEBI" id="CHEBI:33019"/>
        <dbReference type="ChEBI" id="CHEBI:59457"/>
        <dbReference type="ChEBI" id="CHEBI:73183"/>
        <dbReference type="EC" id="3.6.1.31"/>
    </reaction>
</comment>
<comment type="pathway">
    <text evidence="1">Amino-acid biosynthesis; L-histidine biosynthesis; L-histidine from 5-phospho-alpha-D-ribose 1-diphosphate: step 2/9.</text>
</comment>
<comment type="subcellular location">
    <subcellularLocation>
        <location evidence="1">Cytoplasm</location>
    </subcellularLocation>
</comment>
<comment type="similarity">
    <text evidence="1">Belongs to the PRA-PH family.</text>
</comment>
<evidence type="ECO:0000255" key="1">
    <source>
        <dbReference type="HAMAP-Rule" id="MF_01020"/>
    </source>
</evidence>
<feature type="chain" id="PRO_1000190386" description="Phosphoribosyl-ATP pyrophosphatase">
    <location>
        <begin position="1"/>
        <end position="111"/>
    </location>
</feature>
<keyword id="KW-0028">Amino-acid biosynthesis</keyword>
<keyword id="KW-0067">ATP-binding</keyword>
<keyword id="KW-0963">Cytoplasm</keyword>
<keyword id="KW-0368">Histidine biosynthesis</keyword>
<keyword id="KW-0378">Hydrolase</keyword>
<keyword id="KW-0547">Nucleotide-binding</keyword>
<name>HIS2_PSEPW</name>
<protein>
    <recommendedName>
        <fullName evidence="1">Phosphoribosyl-ATP pyrophosphatase</fullName>
        <shortName evidence="1">PRA-PH</shortName>
        <ecNumber evidence="1">3.6.1.31</ecNumber>
    </recommendedName>
</protein>
<sequence>MSDTLNRLAEVLEERKQAAPDSSYVASLYHKGLNKILEKLGEESVETIIAAKDAAVSKDYSDVIYETADLWFHSLVMLSALGQHPQAVLDELERRFGLSGHDEKAAREPSA</sequence>